<sequence length="457" mass="52149">MVNQENGVDLKSATQSDERKLFIETYGCQMNVADSEVVASIMKMDGYSMTENIEEADAIFVNTCSVRDNAEQKIYGRLQYFQSLKRKKKSLIVGVLGCMAERVKEDLIHVHHADLVVGPDSYLDLPNLVGAVEHGEKAINVELSTQETYKDVIPLKLPGVHISGFVSIMRGCNNFCTYCIVPYTRGRERSRDIESILNEIRDMHEKGFKEVTLLGQNVNSYSFEKEGETITFPILLDRVAKEVPDMRIRFTTSHPKDMSDDTLRVIAANDNICKFIHLPAQSGSSRILKVMNRKYTREWYLDRIAAIRRIVPDCAISTDLFCGFHSETEEDYQETLSLMREVGYDSAFLFKYSERPGTYAASHLEDNVPEEEKVRRLQGMIDLQNKLSEESNLRDIGKTFEVLIEGFSKRSREQLFGRTSQNKVVIFDKKNYHVGQFIKVKIHKASSATLFGEPVEE</sequence>
<name>MIAB_PARD8</name>
<accession>A6LEM6</accession>
<proteinExistence type="inferred from homology"/>
<keyword id="KW-0004">4Fe-4S</keyword>
<keyword id="KW-0963">Cytoplasm</keyword>
<keyword id="KW-0408">Iron</keyword>
<keyword id="KW-0411">Iron-sulfur</keyword>
<keyword id="KW-0479">Metal-binding</keyword>
<keyword id="KW-1185">Reference proteome</keyword>
<keyword id="KW-0949">S-adenosyl-L-methionine</keyword>
<keyword id="KW-0808">Transferase</keyword>
<keyword id="KW-0819">tRNA processing</keyword>
<protein>
    <recommendedName>
        <fullName evidence="1">tRNA-2-methylthio-N(6)-dimethylallyladenosine synthase</fullName>
        <ecNumber evidence="1">2.8.4.3</ecNumber>
    </recommendedName>
    <alternativeName>
        <fullName evidence="1">(Dimethylallyl)adenosine tRNA methylthiotransferase MiaB</fullName>
    </alternativeName>
    <alternativeName>
        <fullName evidence="1">tRNA-i(6)A37 methylthiotransferase</fullName>
    </alternativeName>
</protein>
<gene>
    <name evidence="1" type="primary">miaB</name>
    <name type="ordered locus">BDI_2415</name>
</gene>
<evidence type="ECO:0000255" key="1">
    <source>
        <dbReference type="HAMAP-Rule" id="MF_01864"/>
    </source>
</evidence>
<evidence type="ECO:0000255" key="2">
    <source>
        <dbReference type="PROSITE-ProRule" id="PRU01266"/>
    </source>
</evidence>
<organism>
    <name type="scientific">Parabacteroides distasonis (strain ATCC 8503 / DSM 20701 / CIP 104284 / JCM 5825 / NCTC 11152)</name>
    <dbReference type="NCBI Taxonomy" id="435591"/>
    <lineage>
        <taxon>Bacteria</taxon>
        <taxon>Pseudomonadati</taxon>
        <taxon>Bacteroidota</taxon>
        <taxon>Bacteroidia</taxon>
        <taxon>Bacteroidales</taxon>
        <taxon>Tannerellaceae</taxon>
        <taxon>Parabacteroides</taxon>
    </lineage>
</organism>
<comment type="function">
    <text evidence="1">Catalyzes the methylthiolation of N6-(dimethylallyl)adenosine (i(6)A), leading to the formation of 2-methylthio-N6-(dimethylallyl)adenosine (ms(2)i(6)A) at position 37 in tRNAs that read codons beginning with uridine.</text>
</comment>
<comment type="catalytic activity">
    <reaction evidence="1">
        <text>N(6)-dimethylallyladenosine(37) in tRNA + (sulfur carrier)-SH + AH2 + 2 S-adenosyl-L-methionine = 2-methylsulfanyl-N(6)-dimethylallyladenosine(37) in tRNA + (sulfur carrier)-H + 5'-deoxyadenosine + L-methionine + A + S-adenosyl-L-homocysteine + 2 H(+)</text>
        <dbReference type="Rhea" id="RHEA:37067"/>
        <dbReference type="Rhea" id="RHEA-COMP:10375"/>
        <dbReference type="Rhea" id="RHEA-COMP:10376"/>
        <dbReference type="Rhea" id="RHEA-COMP:14737"/>
        <dbReference type="Rhea" id="RHEA-COMP:14739"/>
        <dbReference type="ChEBI" id="CHEBI:13193"/>
        <dbReference type="ChEBI" id="CHEBI:15378"/>
        <dbReference type="ChEBI" id="CHEBI:17319"/>
        <dbReference type="ChEBI" id="CHEBI:17499"/>
        <dbReference type="ChEBI" id="CHEBI:29917"/>
        <dbReference type="ChEBI" id="CHEBI:57844"/>
        <dbReference type="ChEBI" id="CHEBI:57856"/>
        <dbReference type="ChEBI" id="CHEBI:59789"/>
        <dbReference type="ChEBI" id="CHEBI:64428"/>
        <dbReference type="ChEBI" id="CHEBI:74415"/>
        <dbReference type="ChEBI" id="CHEBI:74417"/>
        <dbReference type="EC" id="2.8.4.3"/>
    </reaction>
</comment>
<comment type="cofactor">
    <cofactor evidence="1">
        <name>[4Fe-4S] cluster</name>
        <dbReference type="ChEBI" id="CHEBI:49883"/>
    </cofactor>
    <text evidence="1">Binds 2 [4Fe-4S] clusters. One cluster is coordinated with 3 cysteines and an exchangeable S-adenosyl-L-methionine.</text>
</comment>
<comment type="subunit">
    <text evidence="1">Monomer.</text>
</comment>
<comment type="subcellular location">
    <subcellularLocation>
        <location evidence="1">Cytoplasm</location>
    </subcellularLocation>
</comment>
<comment type="similarity">
    <text evidence="1">Belongs to the methylthiotransferase family. MiaB subfamily.</text>
</comment>
<reference key="1">
    <citation type="journal article" date="2007" name="PLoS Biol.">
        <title>Evolution of symbiotic bacteria in the distal human intestine.</title>
        <authorList>
            <person name="Xu J."/>
            <person name="Mahowald M.A."/>
            <person name="Ley R.E."/>
            <person name="Lozupone C.A."/>
            <person name="Hamady M."/>
            <person name="Martens E.C."/>
            <person name="Henrissat B."/>
            <person name="Coutinho P.M."/>
            <person name="Minx P."/>
            <person name="Latreille P."/>
            <person name="Cordum H."/>
            <person name="Van Brunt A."/>
            <person name="Kim K."/>
            <person name="Fulton R.S."/>
            <person name="Fulton L.A."/>
            <person name="Clifton S.W."/>
            <person name="Wilson R.K."/>
            <person name="Knight R.D."/>
            <person name="Gordon J.I."/>
        </authorList>
    </citation>
    <scope>NUCLEOTIDE SEQUENCE [LARGE SCALE GENOMIC DNA]</scope>
    <source>
        <strain>ATCC 8503 / DSM 20701 / CIP 104284 / JCM 5825 / NCTC 11152</strain>
    </source>
</reference>
<dbReference type="EC" id="2.8.4.3" evidence="1"/>
<dbReference type="EMBL" id="CP000140">
    <property type="protein sequence ID" value="ABR44140.1"/>
    <property type="molecule type" value="Genomic_DNA"/>
</dbReference>
<dbReference type="RefSeq" id="WP_005853885.1">
    <property type="nucleotide sequence ID" value="NZ_LR215978.1"/>
</dbReference>
<dbReference type="SMR" id="A6LEM6"/>
<dbReference type="STRING" id="435591.BDI_2415"/>
<dbReference type="PaxDb" id="435591-BDI_2415"/>
<dbReference type="KEGG" id="pdi:BDI_2415"/>
<dbReference type="eggNOG" id="COG0621">
    <property type="taxonomic scope" value="Bacteria"/>
</dbReference>
<dbReference type="HOGENOM" id="CLU_018697_2_0_10"/>
<dbReference type="BioCyc" id="PDIS435591:G1G5A-2482-MONOMER"/>
<dbReference type="Proteomes" id="UP000000566">
    <property type="component" value="Chromosome"/>
</dbReference>
<dbReference type="GO" id="GO:0005829">
    <property type="term" value="C:cytosol"/>
    <property type="evidence" value="ECO:0007669"/>
    <property type="project" value="TreeGrafter"/>
</dbReference>
<dbReference type="GO" id="GO:0051539">
    <property type="term" value="F:4 iron, 4 sulfur cluster binding"/>
    <property type="evidence" value="ECO:0007669"/>
    <property type="project" value="UniProtKB-UniRule"/>
</dbReference>
<dbReference type="GO" id="GO:0046872">
    <property type="term" value="F:metal ion binding"/>
    <property type="evidence" value="ECO:0007669"/>
    <property type="project" value="UniProtKB-KW"/>
</dbReference>
<dbReference type="GO" id="GO:0035597">
    <property type="term" value="F:N6-isopentenyladenosine methylthiotransferase activity"/>
    <property type="evidence" value="ECO:0007669"/>
    <property type="project" value="TreeGrafter"/>
</dbReference>
<dbReference type="CDD" id="cd01335">
    <property type="entry name" value="Radical_SAM"/>
    <property type="match status" value="1"/>
</dbReference>
<dbReference type="FunFam" id="3.40.50.12160:FF:000003">
    <property type="entry name" value="CDK5 regulatory subunit-associated protein 1"/>
    <property type="match status" value="1"/>
</dbReference>
<dbReference type="FunFam" id="3.80.30.20:FF:000001">
    <property type="entry name" value="tRNA-2-methylthio-N(6)-dimethylallyladenosine synthase 2"/>
    <property type="match status" value="1"/>
</dbReference>
<dbReference type="Gene3D" id="3.40.50.12160">
    <property type="entry name" value="Methylthiotransferase, N-terminal domain"/>
    <property type="match status" value="1"/>
</dbReference>
<dbReference type="Gene3D" id="2.40.50.140">
    <property type="entry name" value="Nucleic acid-binding proteins"/>
    <property type="match status" value="1"/>
</dbReference>
<dbReference type="Gene3D" id="3.80.30.20">
    <property type="entry name" value="tm_1862 like domain"/>
    <property type="match status" value="1"/>
</dbReference>
<dbReference type="HAMAP" id="MF_01864">
    <property type="entry name" value="tRNA_metthiotr_MiaB"/>
    <property type="match status" value="1"/>
</dbReference>
<dbReference type="InterPro" id="IPR006638">
    <property type="entry name" value="Elp3/MiaA/NifB-like_rSAM"/>
</dbReference>
<dbReference type="InterPro" id="IPR005839">
    <property type="entry name" value="Methylthiotransferase"/>
</dbReference>
<dbReference type="InterPro" id="IPR020612">
    <property type="entry name" value="Methylthiotransferase_CS"/>
</dbReference>
<dbReference type="InterPro" id="IPR013848">
    <property type="entry name" value="Methylthiotransferase_N"/>
</dbReference>
<dbReference type="InterPro" id="IPR038135">
    <property type="entry name" value="Methylthiotransferase_N_sf"/>
</dbReference>
<dbReference type="InterPro" id="IPR006463">
    <property type="entry name" value="MiaB_methiolase"/>
</dbReference>
<dbReference type="InterPro" id="IPR012340">
    <property type="entry name" value="NA-bd_OB-fold"/>
</dbReference>
<dbReference type="InterPro" id="IPR007197">
    <property type="entry name" value="rSAM"/>
</dbReference>
<dbReference type="InterPro" id="IPR023404">
    <property type="entry name" value="rSAM_horseshoe"/>
</dbReference>
<dbReference type="InterPro" id="IPR002792">
    <property type="entry name" value="TRAM_dom"/>
</dbReference>
<dbReference type="NCBIfam" id="TIGR01574">
    <property type="entry name" value="miaB-methiolase"/>
    <property type="match status" value="1"/>
</dbReference>
<dbReference type="NCBIfam" id="TIGR00089">
    <property type="entry name" value="MiaB/RimO family radical SAM methylthiotransferase"/>
    <property type="match status" value="1"/>
</dbReference>
<dbReference type="PANTHER" id="PTHR43020">
    <property type="entry name" value="CDK5 REGULATORY SUBUNIT-ASSOCIATED PROTEIN 1"/>
    <property type="match status" value="1"/>
</dbReference>
<dbReference type="PANTHER" id="PTHR43020:SF2">
    <property type="entry name" value="MITOCHONDRIAL TRNA METHYLTHIOTRANSFERASE CDK5RAP1"/>
    <property type="match status" value="1"/>
</dbReference>
<dbReference type="Pfam" id="PF04055">
    <property type="entry name" value="Radical_SAM"/>
    <property type="match status" value="1"/>
</dbReference>
<dbReference type="Pfam" id="PF01938">
    <property type="entry name" value="TRAM"/>
    <property type="match status" value="1"/>
</dbReference>
<dbReference type="Pfam" id="PF00919">
    <property type="entry name" value="UPF0004"/>
    <property type="match status" value="1"/>
</dbReference>
<dbReference type="SFLD" id="SFLDF00273">
    <property type="entry name" value="(dimethylallyl)adenosine_tRNA"/>
    <property type="match status" value="1"/>
</dbReference>
<dbReference type="SFLD" id="SFLDG01082">
    <property type="entry name" value="B12-binding_domain_containing"/>
    <property type="match status" value="1"/>
</dbReference>
<dbReference type="SFLD" id="SFLDF00413">
    <property type="entry name" value="CDK5RAP1"/>
    <property type="match status" value="1"/>
</dbReference>
<dbReference type="SFLD" id="SFLDS00029">
    <property type="entry name" value="Radical_SAM"/>
    <property type="match status" value="1"/>
</dbReference>
<dbReference type="SMART" id="SM00729">
    <property type="entry name" value="Elp3"/>
    <property type="match status" value="1"/>
</dbReference>
<dbReference type="SUPFAM" id="SSF102114">
    <property type="entry name" value="Radical SAM enzymes"/>
    <property type="match status" value="1"/>
</dbReference>
<dbReference type="PROSITE" id="PS51449">
    <property type="entry name" value="MTTASE_N"/>
    <property type="match status" value="1"/>
</dbReference>
<dbReference type="PROSITE" id="PS01278">
    <property type="entry name" value="MTTASE_RADICAL"/>
    <property type="match status" value="1"/>
</dbReference>
<dbReference type="PROSITE" id="PS51918">
    <property type="entry name" value="RADICAL_SAM"/>
    <property type="match status" value="1"/>
</dbReference>
<dbReference type="PROSITE" id="PS50926">
    <property type="entry name" value="TRAM"/>
    <property type="match status" value="1"/>
</dbReference>
<feature type="chain" id="PRO_0000374424" description="tRNA-2-methylthio-N(6)-dimethylallyladenosine synthase">
    <location>
        <begin position="1"/>
        <end position="457"/>
    </location>
</feature>
<feature type="domain" description="MTTase N-terminal" evidence="1">
    <location>
        <begin position="19"/>
        <end position="134"/>
    </location>
</feature>
<feature type="domain" description="Radical SAM core" evidence="2">
    <location>
        <begin position="158"/>
        <end position="390"/>
    </location>
</feature>
<feature type="domain" description="TRAM" evidence="1">
    <location>
        <begin position="393"/>
        <end position="456"/>
    </location>
</feature>
<feature type="binding site" evidence="1">
    <location>
        <position position="28"/>
    </location>
    <ligand>
        <name>[4Fe-4S] cluster</name>
        <dbReference type="ChEBI" id="CHEBI:49883"/>
        <label>1</label>
    </ligand>
</feature>
<feature type="binding site" evidence="1">
    <location>
        <position position="64"/>
    </location>
    <ligand>
        <name>[4Fe-4S] cluster</name>
        <dbReference type="ChEBI" id="CHEBI:49883"/>
        <label>1</label>
    </ligand>
</feature>
<feature type="binding site" evidence="1">
    <location>
        <position position="98"/>
    </location>
    <ligand>
        <name>[4Fe-4S] cluster</name>
        <dbReference type="ChEBI" id="CHEBI:49883"/>
        <label>1</label>
    </ligand>
</feature>
<feature type="binding site" evidence="1">
    <location>
        <position position="172"/>
    </location>
    <ligand>
        <name>[4Fe-4S] cluster</name>
        <dbReference type="ChEBI" id="CHEBI:49883"/>
        <label>2</label>
        <note>4Fe-4S-S-AdoMet</note>
    </ligand>
</feature>
<feature type="binding site" evidence="1">
    <location>
        <position position="176"/>
    </location>
    <ligand>
        <name>[4Fe-4S] cluster</name>
        <dbReference type="ChEBI" id="CHEBI:49883"/>
        <label>2</label>
        <note>4Fe-4S-S-AdoMet</note>
    </ligand>
</feature>
<feature type="binding site" evidence="1">
    <location>
        <position position="179"/>
    </location>
    <ligand>
        <name>[4Fe-4S] cluster</name>
        <dbReference type="ChEBI" id="CHEBI:49883"/>
        <label>2</label>
        <note>4Fe-4S-S-AdoMet</note>
    </ligand>
</feature>